<gene>
    <name evidence="1" type="primary">coaX2</name>
    <name type="ordered locus">FTH_1606</name>
</gene>
<protein>
    <recommendedName>
        <fullName evidence="1">Type III pantothenate kinase 2</fullName>
        <ecNumber evidence="1">2.7.1.33</ecNumber>
    </recommendedName>
    <alternativeName>
        <fullName evidence="1">PanK-III 2</fullName>
    </alternativeName>
    <alternativeName>
        <fullName evidence="1">Pantothenic acid kinase 2</fullName>
    </alternativeName>
</protein>
<organism>
    <name type="scientific">Francisella tularensis subsp. holarctica (strain OSU18)</name>
    <dbReference type="NCBI Taxonomy" id="393011"/>
    <lineage>
        <taxon>Bacteria</taxon>
        <taxon>Pseudomonadati</taxon>
        <taxon>Pseudomonadota</taxon>
        <taxon>Gammaproteobacteria</taxon>
        <taxon>Thiotrichales</taxon>
        <taxon>Francisellaceae</taxon>
        <taxon>Francisella</taxon>
    </lineage>
</organism>
<comment type="function">
    <text evidence="1">Catalyzes the phosphorylation of pantothenate (Pan), the first step in CoA biosynthesis.</text>
</comment>
<comment type="catalytic activity">
    <reaction evidence="1">
        <text>(R)-pantothenate + ATP = (R)-4'-phosphopantothenate + ADP + H(+)</text>
        <dbReference type="Rhea" id="RHEA:16373"/>
        <dbReference type="ChEBI" id="CHEBI:10986"/>
        <dbReference type="ChEBI" id="CHEBI:15378"/>
        <dbReference type="ChEBI" id="CHEBI:29032"/>
        <dbReference type="ChEBI" id="CHEBI:30616"/>
        <dbReference type="ChEBI" id="CHEBI:456216"/>
        <dbReference type="EC" id="2.7.1.33"/>
    </reaction>
</comment>
<comment type="cofactor">
    <cofactor evidence="1">
        <name>NH4(+)</name>
        <dbReference type="ChEBI" id="CHEBI:28938"/>
    </cofactor>
    <cofactor evidence="1">
        <name>K(+)</name>
        <dbReference type="ChEBI" id="CHEBI:29103"/>
    </cofactor>
    <text evidence="1">A monovalent cation. Ammonium or potassium.</text>
</comment>
<comment type="pathway">
    <text evidence="1">Cofactor biosynthesis; coenzyme A biosynthesis; CoA from (R)-pantothenate: step 1/5.</text>
</comment>
<comment type="subunit">
    <text evidence="1">Homodimer.</text>
</comment>
<comment type="subcellular location">
    <subcellularLocation>
        <location evidence="1">Cytoplasm</location>
    </subcellularLocation>
</comment>
<comment type="similarity">
    <text evidence="1">Belongs to the type III pantothenate kinase family.</text>
</comment>
<evidence type="ECO:0000255" key="1">
    <source>
        <dbReference type="HAMAP-Rule" id="MF_01274"/>
    </source>
</evidence>
<feature type="chain" id="PRO_0000267531" description="Type III pantothenate kinase 2">
    <location>
        <begin position="1"/>
        <end position="254"/>
    </location>
</feature>
<feature type="active site" description="Proton acceptor" evidence="1">
    <location>
        <position position="109"/>
    </location>
</feature>
<feature type="binding site" evidence="1">
    <location>
        <begin position="6"/>
        <end position="13"/>
    </location>
    <ligand>
        <name>ATP</name>
        <dbReference type="ChEBI" id="CHEBI:30616"/>
    </ligand>
</feature>
<feature type="binding site" evidence="1">
    <location>
        <begin position="107"/>
        <end position="110"/>
    </location>
    <ligand>
        <name>substrate</name>
    </ligand>
</feature>
<feature type="binding site" evidence="1">
    <location>
        <position position="130"/>
    </location>
    <ligand>
        <name>K(+)</name>
        <dbReference type="ChEBI" id="CHEBI:29103"/>
    </ligand>
</feature>
<feature type="binding site" evidence="1">
    <location>
        <position position="133"/>
    </location>
    <ligand>
        <name>ATP</name>
        <dbReference type="ChEBI" id="CHEBI:30616"/>
    </ligand>
</feature>
<feature type="binding site" evidence="1">
    <location>
        <position position="185"/>
    </location>
    <ligand>
        <name>substrate</name>
    </ligand>
</feature>
<keyword id="KW-0067">ATP-binding</keyword>
<keyword id="KW-0173">Coenzyme A biosynthesis</keyword>
<keyword id="KW-0963">Cytoplasm</keyword>
<keyword id="KW-0418">Kinase</keyword>
<keyword id="KW-0479">Metal-binding</keyword>
<keyword id="KW-0547">Nucleotide-binding</keyword>
<keyword id="KW-0630">Potassium</keyword>
<keyword id="KW-0808">Transferase</keyword>
<name>COAX2_FRATO</name>
<sequence length="254" mass="27504">MLLVMDMGNSHIHIGVFDGDIIVSQIRYATSSVDSTSDQMGVFLRQALRENSVDLGKIDGYGISSVVPHLNYSLGSAVIKYFNIKPFFISMDTTDLDMSAVEAHQVGADRIASCISAIADHPNKDLLIIDLGTATTFDLVTKDKKYLSGSIMPGVKLSLNALCQGASQLSSVTIVKPEVAIGYDTKTNIRSGLYYGHLGALRRSVEEFGSPVYTIATGGFAGLFKEEDIFNEISPDLILRGIRIAFLENNKKGV</sequence>
<reference key="1">
    <citation type="journal article" date="2006" name="J. Bacteriol.">
        <title>Chromosome rearrangement and diversification of Francisella tularensis revealed by the type B (OSU18) genome sequence.</title>
        <authorList>
            <person name="Petrosino J.F."/>
            <person name="Xiang Q."/>
            <person name="Karpathy S.E."/>
            <person name="Jiang H."/>
            <person name="Yerrapragada S."/>
            <person name="Liu Y."/>
            <person name="Gioia J."/>
            <person name="Hemphill L."/>
            <person name="Gonzalez A."/>
            <person name="Raghavan T.M."/>
            <person name="Uzman A."/>
            <person name="Fox G.E."/>
            <person name="Highlander S."/>
            <person name="Reichard M."/>
            <person name="Morton R.J."/>
            <person name="Clinkenbeard K.D."/>
            <person name="Weinstock G.M."/>
        </authorList>
    </citation>
    <scope>NUCLEOTIDE SEQUENCE [LARGE SCALE GENOMIC DNA]</scope>
    <source>
        <strain>OSU18</strain>
    </source>
</reference>
<proteinExistence type="inferred from homology"/>
<accession>Q0BKJ6</accession>
<dbReference type="EC" id="2.7.1.33" evidence="1"/>
<dbReference type="EMBL" id="CP000437">
    <property type="protein sequence ID" value="ABI83388.1"/>
    <property type="molecule type" value="Genomic_DNA"/>
</dbReference>
<dbReference type="RefSeq" id="WP_003017101.1">
    <property type="nucleotide sequence ID" value="NC_017463.1"/>
</dbReference>
<dbReference type="SMR" id="Q0BKJ6"/>
<dbReference type="KEGG" id="fth:FTH_1606"/>
<dbReference type="UniPathway" id="UPA00241">
    <property type="reaction ID" value="UER00352"/>
</dbReference>
<dbReference type="GO" id="GO:0005737">
    <property type="term" value="C:cytoplasm"/>
    <property type="evidence" value="ECO:0007669"/>
    <property type="project" value="UniProtKB-SubCell"/>
</dbReference>
<dbReference type="GO" id="GO:0005524">
    <property type="term" value="F:ATP binding"/>
    <property type="evidence" value="ECO:0007669"/>
    <property type="project" value="UniProtKB-UniRule"/>
</dbReference>
<dbReference type="GO" id="GO:0046872">
    <property type="term" value="F:metal ion binding"/>
    <property type="evidence" value="ECO:0007669"/>
    <property type="project" value="UniProtKB-KW"/>
</dbReference>
<dbReference type="GO" id="GO:0004594">
    <property type="term" value="F:pantothenate kinase activity"/>
    <property type="evidence" value="ECO:0007669"/>
    <property type="project" value="UniProtKB-UniRule"/>
</dbReference>
<dbReference type="GO" id="GO:0015937">
    <property type="term" value="P:coenzyme A biosynthetic process"/>
    <property type="evidence" value="ECO:0007669"/>
    <property type="project" value="UniProtKB-UniRule"/>
</dbReference>
<dbReference type="CDD" id="cd24015">
    <property type="entry name" value="ASKHA_NBD_PanK-III"/>
    <property type="match status" value="1"/>
</dbReference>
<dbReference type="Gene3D" id="3.30.420.40">
    <property type="match status" value="2"/>
</dbReference>
<dbReference type="HAMAP" id="MF_01274">
    <property type="entry name" value="Pantothen_kinase_3"/>
    <property type="match status" value="1"/>
</dbReference>
<dbReference type="InterPro" id="IPR043129">
    <property type="entry name" value="ATPase_NBD"/>
</dbReference>
<dbReference type="InterPro" id="IPR004619">
    <property type="entry name" value="Type_III_PanK"/>
</dbReference>
<dbReference type="NCBIfam" id="TIGR00671">
    <property type="entry name" value="baf"/>
    <property type="match status" value="1"/>
</dbReference>
<dbReference type="NCBIfam" id="NF009855">
    <property type="entry name" value="PRK13321.1"/>
    <property type="match status" value="1"/>
</dbReference>
<dbReference type="NCBIfam" id="NF009861">
    <property type="entry name" value="PRK13324.1"/>
    <property type="match status" value="1"/>
</dbReference>
<dbReference type="PANTHER" id="PTHR34265">
    <property type="entry name" value="TYPE III PANTOTHENATE KINASE"/>
    <property type="match status" value="1"/>
</dbReference>
<dbReference type="PANTHER" id="PTHR34265:SF1">
    <property type="entry name" value="TYPE III PANTOTHENATE KINASE"/>
    <property type="match status" value="1"/>
</dbReference>
<dbReference type="Pfam" id="PF03309">
    <property type="entry name" value="Pan_kinase"/>
    <property type="match status" value="1"/>
</dbReference>
<dbReference type="SUPFAM" id="SSF53067">
    <property type="entry name" value="Actin-like ATPase domain"/>
    <property type="match status" value="2"/>
</dbReference>